<comment type="function">
    <text evidence="1 2">Aquaporins form homotetrameric transmembrane channels, with each monomer independently mediating water transport across the plasma membrane along its osmotic gradient (By similarity). Plays an important role in fluid secretion in salivary glands (By similarity). Required for TRPV4 activation by hypotonicity. Together with TRPV4, controls regulatory volume decrease in salivary epithelial cells (By similarity). Seems to play a redundant role in water transport in the eye, lung and in sweat glands (By similarity).</text>
</comment>
<comment type="catalytic activity">
    <reaction evidence="1">
        <text>H2O(in) = H2O(out)</text>
        <dbReference type="Rhea" id="RHEA:29667"/>
        <dbReference type="ChEBI" id="CHEBI:15377"/>
    </reaction>
</comment>
<comment type="subunit">
    <text evidence="1">Homotetramer; each monomer provides an independent water pore. Interacts with TRPV4; the interaction is probably indirect and regulates TRPV4 activation by hypotonicity.</text>
</comment>
<comment type="subcellular location">
    <subcellularLocation>
        <location evidence="2">Apical cell membrane</location>
        <topology evidence="1">Multi-pass membrane protein</topology>
    </subcellularLocation>
    <subcellularLocation>
        <location evidence="1">Cell membrane</location>
        <topology evidence="1">Multi-pass membrane protein</topology>
    </subcellularLocation>
    <subcellularLocation>
        <location evidence="1">Cytoplasmic vesicle membrane</location>
        <topology evidence="1">Multi-pass membrane protein</topology>
    </subcellularLocation>
    <text evidence="1">Hypotonicity increases location at the cell membrane. Phosphorylation decreases location at the cell membrane.</text>
</comment>
<comment type="domain">
    <text evidence="1">Aquaporins contain two tandem repeats each containing three membrane-spanning domains and a pore-forming loop with the signature motif Asn-Pro-Ala (NPA).</text>
</comment>
<comment type="similarity">
    <text evidence="4">Belongs to the MIP/aquaporin (TC 1.A.8) family.</text>
</comment>
<reference key="1">
    <citation type="submission" date="2002-11" db="EMBL/GenBank/DDBJ databases">
        <title>Aquaporin 4 and 5 from sheep.</title>
        <authorList>
            <person name="Coghlan M.W."/>
            <person name="Koukoulas I."/>
            <person name="Armugam A."/>
            <person name="Jeyaseelan K."/>
        </authorList>
    </citation>
    <scope>NUCLEOTIDE SEQUENCE [MRNA]</scope>
    <source>
        <tissue>Lung</tissue>
    </source>
</reference>
<protein>
    <recommendedName>
        <fullName evidence="1">Aquaporin-5</fullName>
        <shortName>AQP-5</shortName>
    </recommendedName>
</protein>
<dbReference type="EMBL" id="AY177613">
    <property type="protein sequence ID" value="AAO21367.1"/>
    <property type="molecule type" value="mRNA"/>
</dbReference>
<dbReference type="RefSeq" id="NP_001009273.1">
    <property type="nucleotide sequence ID" value="NM_001009273.2"/>
</dbReference>
<dbReference type="SMR" id="Q866S3"/>
<dbReference type="STRING" id="9940.ENSOARP00000019504"/>
<dbReference type="GlyCosmos" id="Q866S3">
    <property type="glycosylation" value="2 sites, No reported glycans"/>
</dbReference>
<dbReference type="PaxDb" id="9940-ENSOARP00000019504"/>
<dbReference type="GeneID" id="443251"/>
<dbReference type="KEGG" id="oas:443251"/>
<dbReference type="CTD" id="362"/>
<dbReference type="eggNOG" id="KOG0223">
    <property type="taxonomic scope" value="Eukaryota"/>
</dbReference>
<dbReference type="OrthoDB" id="3222at2759"/>
<dbReference type="Proteomes" id="UP000002356">
    <property type="component" value="Unplaced"/>
</dbReference>
<dbReference type="GO" id="GO:0016324">
    <property type="term" value="C:apical plasma membrane"/>
    <property type="evidence" value="ECO:0007669"/>
    <property type="project" value="UniProtKB-SubCell"/>
</dbReference>
<dbReference type="GO" id="GO:0030659">
    <property type="term" value="C:cytoplasmic vesicle membrane"/>
    <property type="evidence" value="ECO:0000250"/>
    <property type="project" value="UniProtKB"/>
</dbReference>
<dbReference type="GO" id="GO:0005886">
    <property type="term" value="C:plasma membrane"/>
    <property type="evidence" value="ECO:0000250"/>
    <property type="project" value="UniProtKB"/>
</dbReference>
<dbReference type="GO" id="GO:0015250">
    <property type="term" value="F:water channel activity"/>
    <property type="evidence" value="ECO:0000250"/>
    <property type="project" value="UniProtKB"/>
</dbReference>
<dbReference type="GO" id="GO:0015670">
    <property type="term" value="P:carbon dioxide transport"/>
    <property type="evidence" value="ECO:0007669"/>
    <property type="project" value="TreeGrafter"/>
</dbReference>
<dbReference type="GO" id="GO:0071476">
    <property type="term" value="P:cellular hypotonic response"/>
    <property type="evidence" value="ECO:0000250"/>
    <property type="project" value="UniProtKB"/>
</dbReference>
<dbReference type="GO" id="GO:0051289">
    <property type="term" value="P:protein homotetramerization"/>
    <property type="evidence" value="ECO:0000250"/>
    <property type="project" value="UniProtKB"/>
</dbReference>
<dbReference type="GO" id="GO:0006833">
    <property type="term" value="P:water transport"/>
    <property type="evidence" value="ECO:0000250"/>
    <property type="project" value="UniProtKB"/>
</dbReference>
<dbReference type="CDD" id="cd00333">
    <property type="entry name" value="MIP"/>
    <property type="match status" value="1"/>
</dbReference>
<dbReference type="FunFam" id="1.20.1080.10:FF:000003">
    <property type="entry name" value="Lens fiber major intrinsic"/>
    <property type="match status" value="1"/>
</dbReference>
<dbReference type="Gene3D" id="1.20.1080.10">
    <property type="entry name" value="Glycerol uptake facilitator protein"/>
    <property type="match status" value="1"/>
</dbReference>
<dbReference type="InterPro" id="IPR023271">
    <property type="entry name" value="Aquaporin-like"/>
</dbReference>
<dbReference type="InterPro" id="IPR023276">
    <property type="entry name" value="Aquaporin_5"/>
</dbReference>
<dbReference type="InterPro" id="IPR034294">
    <property type="entry name" value="Aquaporin_transptr"/>
</dbReference>
<dbReference type="InterPro" id="IPR000425">
    <property type="entry name" value="MIP"/>
</dbReference>
<dbReference type="InterPro" id="IPR022357">
    <property type="entry name" value="MIP_CS"/>
</dbReference>
<dbReference type="NCBIfam" id="TIGR00861">
    <property type="entry name" value="MIP"/>
    <property type="match status" value="1"/>
</dbReference>
<dbReference type="PANTHER" id="PTHR19139">
    <property type="entry name" value="AQUAPORIN TRANSPORTER"/>
    <property type="match status" value="1"/>
</dbReference>
<dbReference type="PANTHER" id="PTHR19139:SF38">
    <property type="entry name" value="AQUAPORIN-5"/>
    <property type="match status" value="1"/>
</dbReference>
<dbReference type="Pfam" id="PF00230">
    <property type="entry name" value="MIP"/>
    <property type="match status" value="1"/>
</dbReference>
<dbReference type="PRINTS" id="PR02017">
    <property type="entry name" value="AQUAPORIN5"/>
</dbReference>
<dbReference type="PRINTS" id="PR00783">
    <property type="entry name" value="MINTRINSICP"/>
</dbReference>
<dbReference type="SUPFAM" id="SSF81338">
    <property type="entry name" value="Aquaporin-like"/>
    <property type="match status" value="1"/>
</dbReference>
<dbReference type="PROSITE" id="PS00221">
    <property type="entry name" value="MIP"/>
    <property type="match status" value="1"/>
</dbReference>
<keyword id="KW-1003">Cell membrane</keyword>
<keyword id="KW-0968">Cytoplasmic vesicle</keyword>
<keyword id="KW-0325">Glycoprotein</keyword>
<keyword id="KW-0472">Membrane</keyword>
<keyword id="KW-1185">Reference proteome</keyword>
<keyword id="KW-0677">Repeat</keyword>
<keyword id="KW-0812">Transmembrane</keyword>
<keyword id="KW-1133">Transmembrane helix</keyword>
<keyword id="KW-0813">Transport</keyword>
<feature type="chain" id="PRO_0000063954" description="Aquaporin-5">
    <location>
        <begin position="1"/>
        <end position="265"/>
    </location>
</feature>
<feature type="topological domain" description="Cytoplasmic" evidence="4">
    <location>
        <begin position="1"/>
        <end position="12"/>
    </location>
</feature>
<feature type="transmembrane region" description="Helical" evidence="1">
    <location>
        <begin position="13"/>
        <end position="33"/>
    </location>
</feature>
<feature type="topological domain" description="Extracellular" evidence="4">
    <location>
        <begin position="34"/>
        <end position="39"/>
    </location>
</feature>
<feature type="transmembrane region" description="Helical" evidence="1">
    <location>
        <begin position="40"/>
        <end position="60"/>
    </location>
</feature>
<feature type="topological domain" description="Cytoplasmic" evidence="4">
    <location>
        <begin position="61"/>
        <end position="65"/>
    </location>
</feature>
<feature type="intramembrane region" description="Discontinuously helical" evidence="1">
    <location>
        <begin position="66"/>
        <end position="74"/>
    </location>
</feature>
<feature type="topological domain" description="Cytoplasmic" evidence="4">
    <location>
        <begin position="75"/>
        <end position="87"/>
    </location>
</feature>
<feature type="transmembrane region" description="Helical" evidence="1">
    <location>
        <begin position="88"/>
        <end position="108"/>
    </location>
</feature>
<feature type="topological domain" description="Extracellular" evidence="4">
    <location>
        <begin position="109"/>
        <end position="126"/>
    </location>
</feature>
<feature type="transmembrane region" description="Helical" evidence="1">
    <location>
        <begin position="127"/>
        <end position="147"/>
    </location>
</feature>
<feature type="topological domain" description="Cytoplasmic" evidence="4">
    <location>
        <begin position="148"/>
        <end position="158"/>
    </location>
</feature>
<feature type="transmembrane region" description="Helical" evidence="1">
    <location>
        <begin position="159"/>
        <end position="179"/>
    </location>
</feature>
<feature type="topological domain" description="Extracellular" evidence="4">
    <location>
        <position position="180"/>
    </location>
</feature>
<feature type="intramembrane region" description="Discontinuously helical" evidence="1">
    <location>
        <begin position="181"/>
        <end position="191"/>
    </location>
</feature>
<feature type="topological domain" description="Extracellular" evidence="4">
    <location>
        <begin position="192"/>
        <end position="203"/>
    </location>
</feature>
<feature type="transmembrane region" description="Helical" evidence="1">
    <location>
        <begin position="204"/>
        <end position="224"/>
    </location>
</feature>
<feature type="topological domain" description="Cytoplasmic" evidence="4">
    <location>
        <begin position="225"/>
        <end position="265"/>
    </location>
</feature>
<feature type="short sequence motif" description="NPA 1" evidence="1">
    <location>
        <begin position="69"/>
        <end position="71"/>
    </location>
</feature>
<feature type="short sequence motif" description="NPA 2" evidence="1">
    <location>
        <begin position="185"/>
        <end position="187"/>
    </location>
</feature>
<feature type="glycosylation site" description="N-linked (GlcNAc...) asparagine" evidence="3">
    <location>
        <position position="124"/>
    </location>
</feature>
<feature type="glycosylation site" description="N-linked (GlcNAc...) asparagine" evidence="3">
    <location>
        <position position="125"/>
    </location>
</feature>
<organism>
    <name type="scientific">Ovis aries</name>
    <name type="common">Sheep</name>
    <dbReference type="NCBI Taxonomy" id="9940"/>
    <lineage>
        <taxon>Eukaryota</taxon>
        <taxon>Metazoa</taxon>
        <taxon>Chordata</taxon>
        <taxon>Craniata</taxon>
        <taxon>Vertebrata</taxon>
        <taxon>Euteleostomi</taxon>
        <taxon>Mammalia</taxon>
        <taxon>Eutheria</taxon>
        <taxon>Laurasiatheria</taxon>
        <taxon>Artiodactyla</taxon>
        <taxon>Ruminantia</taxon>
        <taxon>Pecora</taxon>
        <taxon>Bovidae</taxon>
        <taxon>Caprinae</taxon>
        <taxon>Ovis</taxon>
    </lineage>
</organism>
<evidence type="ECO:0000250" key="1">
    <source>
        <dbReference type="UniProtKB" id="P55064"/>
    </source>
</evidence>
<evidence type="ECO:0000250" key="2">
    <source>
        <dbReference type="UniProtKB" id="Q9WTY4"/>
    </source>
</evidence>
<evidence type="ECO:0000255" key="3"/>
<evidence type="ECO:0000305" key="4"/>
<gene>
    <name evidence="1" type="primary">AQP5</name>
</gene>
<proteinExistence type="evidence at transcript level"/>
<accession>Q866S3</accession>
<sequence>MKKEVCSAAFLKAVFAEFLATLIFVFFGLGSALKWPSAMPSVLQISLAFGLAIGTMAQALGPVSGGHMNPAITLALLVGNQISLLRAVFYLVAQLVGAIAGAAILYGLAPYNARSNLAVNALNNNTTAGQAVVAEMILTFQLALCVFSSTDSRRTSPVGSPALSIGLSVTLGHLVGIYFTGCSMNPARSFGPAVIMSRFSSAHWVFWVGPIVGAATAAIIYFYLLFPHSLSLSDRVAILKGTYEPDEDWEESQEERKKTMELTAH</sequence>
<name>AQP5_SHEEP</name>